<proteinExistence type="inferred from homology"/>
<gene>
    <name evidence="1" type="primary">atpE</name>
    <name type="ordered locus">azo0154</name>
</gene>
<dbReference type="EMBL" id="AM406670">
    <property type="protein sequence ID" value="CAL92772.1"/>
    <property type="molecule type" value="Genomic_DNA"/>
</dbReference>
<dbReference type="RefSeq" id="WP_002925444.1">
    <property type="nucleotide sequence ID" value="NZ_CP016210.1"/>
</dbReference>
<dbReference type="SMR" id="A1K1R7"/>
<dbReference type="STRING" id="62928.azo0154"/>
<dbReference type="KEGG" id="aoa:dqs_0163"/>
<dbReference type="KEGG" id="azo:azo0154"/>
<dbReference type="eggNOG" id="ENOG5032S3K">
    <property type="taxonomic scope" value="Bacteria"/>
</dbReference>
<dbReference type="HOGENOM" id="CLU_148047_1_0_4"/>
<dbReference type="OrthoDB" id="9811659at2"/>
<dbReference type="Proteomes" id="UP000002588">
    <property type="component" value="Chromosome"/>
</dbReference>
<dbReference type="GO" id="GO:0005886">
    <property type="term" value="C:plasma membrane"/>
    <property type="evidence" value="ECO:0007669"/>
    <property type="project" value="UniProtKB-SubCell"/>
</dbReference>
<dbReference type="GO" id="GO:0045259">
    <property type="term" value="C:proton-transporting ATP synthase complex"/>
    <property type="evidence" value="ECO:0007669"/>
    <property type="project" value="UniProtKB-KW"/>
</dbReference>
<dbReference type="GO" id="GO:0033177">
    <property type="term" value="C:proton-transporting two-sector ATPase complex, proton-transporting domain"/>
    <property type="evidence" value="ECO:0007669"/>
    <property type="project" value="InterPro"/>
</dbReference>
<dbReference type="GO" id="GO:0008289">
    <property type="term" value="F:lipid binding"/>
    <property type="evidence" value="ECO:0007669"/>
    <property type="project" value="UniProtKB-KW"/>
</dbReference>
<dbReference type="GO" id="GO:0046933">
    <property type="term" value="F:proton-transporting ATP synthase activity, rotational mechanism"/>
    <property type="evidence" value="ECO:0007669"/>
    <property type="project" value="UniProtKB-UniRule"/>
</dbReference>
<dbReference type="CDD" id="cd18185">
    <property type="entry name" value="ATP-synt_Fo_c_ATPE"/>
    <property type="match status" value="1"/>
</dbReference>
<dbReference type="FunFam" id="1.20.20.10:FF:000002">
    <property type="entry name" value="ATP synthase subunit c"/>
    <property type="match status" value="1"/>
</dbReference>
<dbReference type="Gene3D" id="1.20.20.10">
    <property type="entry name" value="F1F0 ATP synthase subunit C"/>
    <property type="match status" value="1"/>
</dbReference>
<dbReference type="HAMAP" id="MF_01396">
    <property type="entry name" value="ATP_synth_c_bact"/>
    <property type="match status" value="1"/>
</dbReference>
<dbReference type="InterPro" id="IPR005953">
    <property type="entry name" value="ATP_synth_csu_bac/chlpt"/>
</dbReference>
<dbReference type="InterPro" id="IPR000454">
    <property type="entry name" value="ATP_synth_F0_csu"/>
</dbReference>
<dbReference type="InterPro" id="IPR020537">
    <property type="entry name" value="ATP_synth_F0_csu_DDCD_BS"/>
</dbReference>
<dbReference type="InterPro" id="IPR038662">
    <property type="entry name" value="ATP_synth_F0_csu_sf"/>
</dbReference>
<dbReference type="InterPro" id="IPR002379">
    <property type="entry name" value="ATPase_proteolipid_c-like_dom"/>
</dbReference>
<dbReference type="InterPro" id="IPR035921">
    <property type="entry name" value="F/V-ATP_Csub_sf"/>
</dbReference>
<dbReference type="NCBIfam" id="TIGR01260">
    <property type="entry name" value="ATP_synt_c"/>
    <property type="match status" value="1"/>
</dbReference>
<dbReference type="NCBIfam" id="NF005363">
    <property type="entry name" value="PRK06876.1"/>
    <property type="match status" value="1"/>
</dbReference>
<dbReference type="Pfam" id="PF00137">
    <property type="entry name" value="ATP-synt_C"/>
    <property type="match status" value="1"/>
</dbReference>
<dbReference type="PRINTS" id="PR00124">
    <property type="entry name" value="ATPASEC"/>
</dbReference>
<dbReference type="SUPFAM" id="SSF81333">
    <property type="entry name" value="F1F0 ATP synthase subunit C"/>
    <property type="match status" value="1"/>
</dbReference>
<dbReference type="PROSITE" id="PS00605">
    <property type="entry name" value="ATPASE_C"/>
    <property type="match status" value="1"/>
</dbReference>
<accession>A1K1R7</accession>
<feature type="chain" id="PRO_1000184320" description="ATP synthase subunit c">
    <location>
        <begin position="1"/>
        <end position="81"/>
    </location>
</feature>
<feature type="transmembrane region" description="Helical" evidence="1">
    <location>
        <begin position="7"/>
        <end position="27"/>
    </location>
</feature>
<feature type="transmembrane region" description="Helical" evidence="1">
    <location>
        <begin position="53"/>
        <end position="73"/>
    </location>
</feature>
<feature type="site" description="Reversibly protonated during proton transport" evidence="1">
    <location>
        <position position="60"/>
    </location>
</feature>
<comment type="function">
    <text evidence="1">F(1)F(0) ATP synthase produces ATP from ADP in the presence of a proton or sodium gradient. F-type ATPases consist of two structural domains, F(1) containing the extramembraneous catalytic core and F(0) containing the membrane proton channel, linked together by a central stalk and a peripheral stalk. During catalysis, ATP synthesis in the catalytic domain of F(1) is coupled via a rotary mechanism of the central stalk subunits to proton translocation.</text>
</comment>
<comment type="function">
    <text evidence="1">Key component of the F(0) channel; it plays a direct role in translocation across the membrane. A homomeric c-ring of between 10-14 subunits forms the central stalk rotor element with the F(1) delta and epsilon subunits.</text>
</comment>
<comment type="subunit">
    <text evidence="1">F-type ATPases have 2 components, F(1) - the catalytic core - and F(0) - the membrane proton channel. F(1) has five subunits: alpha(3), beta(3), gamma(1), delta(1), epsilon(1). F(0) has three main subunits: a(1), b(2) and c(10-14). The alpha and beta chains form an alternating ring which encloses part of the gamma chain. F(1) is attached to F(0) by a central stalk formed by the gamma and epsilon chains, while a peripheral stalk is formed by the delta and b chains.</text>
</comment>
<comment type="subcellular location">
    <subcellularLocation>
        <location evidence="1">Cell inner membrane</location>
        <topology evidence="1">Multi-pass membrane protein</topology>
    </subcellularLocation>
</comment>
<comment type="similarity">
    <text evidence="1">Belongs to the ATPase C chain family.</text>
</comment>
<organism>
    <name type="scientific">Azoarcus sp. (strain BH72)</name>
    <dbReference type="NCBI Taxonomy" id="418699"/>
    <lineage>
        <taxon>Bacteria</taxon>
        <taxon>Pseudomonadati</taxon>
        <taxon>Pseudomonadota</taxon>
        <taxon>Betaproteobacteria</taxon>
        <taxon>Rhodocyclales</taxon>
        <taxon>Zoogloeaceae</taxon>
        <taxon>Azoarcus</taxon>
    </lineage>
</organism>
<sequence>MENVLGFVALAAGLIIGLGAIGACIGIGIMGSKYLEASARQPELMNALQTKMFLLAGLIDAAFLIGVGIAMMFAFANPFQL</sequence>
<keyword id="KW-0066">ATP synthesis</keyword>
<keyword id="KW-0997">Cell inner membrane</keyword>
<keyword id="KW-1003">Cell membrane</keyword>
<keyword id="KW-0138">CF(0)</keyword>
<keyword id="KW-0375">Hydrogen ion transport</keyword>
<keyword id="KW-0406">Ion transport</keyword>
<keyword id="KW-0446">Lipid-binding</keyword>
<keyword id="KW-0472">Membrane</keyword>
<keyword id="KW-1185">Reference proteome</keyword>
<keyword id="KW-0812">Transmembrane</keyword>
<keyword id="KW-1133">Transmembrane helix</keyword>
<keyword id="KW-0813">Transport</keyword>
<evidence type="ECO:0000255" key="1">
    <source>
        <dbReference type="HAMAP-Rule" id="MF_01396"/>
    </source>
</evidence>
<reference key="1">
    <citation type="journal article" date="2006" name="Nat. Biotechnol.">
        <title>Complete genome of the mutualistic, N2-fixing grass endophyte Azoarcus sp. strain BH72.</title>
        <authorList>
            <person name="Krause A."/>
            <person name="Ramakumar A."/>
            <person name="Bartels D."/>
            <person name="Battistoni F."/>
            <person name="Bekel T."/>
            <person name="Boch J."/>
            <person name="Boehm M."/>
            <person name="Friedrich F."/>
            <person name="Hurek T."/>
            <person name="Krause L."/>
            <person name="Linke B."/>
            <person name="McHardy A.C."/>
            <person name="Sarkar A."/>
            <person name="Schneiker S."/>
            <person name="Syed A.A."/>
            <person name="Thauer R."/>
            <person name="Vorhoelter F.-J."/>
            <person name="Weidner S."/>
            <person name="Puehler A."/>
            <person name="Reinhold-Hurek B."/>
            <person name="Kaiser O."/>
            <person name="Goesmann A."/>
        </authorList>
    </citation>
    <scope>NUCLEOTIDE SEQUENCE [LARGE SCALE GENOMIC DNA]</scope>
    <source>
        <strain>BH72</strain>
    </source>
</reference>
<name>ATPL_AZOSB</name>
<protein>
    <recommendedName>
        <fullName evidence="1">ATP synthase subunit c</fullName>
    </recommendedName>
    <alternativeName>
        <fullName evidence="1">ATP synthase F(0) sector subunit c</fullName>
    </alternativeName>
    <alternativeName>
        <fullName evidence="1">F-type ATPase subunit c</fullName>
        <shortName evidence="1">F-ATPase subunit c</shortName>
    </alternativeName>
    <alternativeName>
        <fullName evidence="1">Lipid-binding protein</fullName>
    </alternativeName>
</protein>